<protein>
    <recommendedName>
        <fullName evidence="1">NAD(P)H-quinone oxidoreductase chain 4, chloroplastic</fullName>
        <ecNumber evidence="1">7.1.1.-</ecNumber>
    </recommendedName>
    <alternativeName>
        <fullName evidence="1">NAD(P)H dehydrogenase, chain 4</fullName>
    </alternativeName>
    <alternativeName>
        <fullName evidence="1">NADH-plastoquinone oxidoreductase chain 4</fullName>
    </alternativeName>
</protein>
<dbReference type="EC" id="7.1.1.-" evidence="1"/>
<dbReference type="EMBL" id="DQ119058">
    <property type="status" value="NOT_ANNOTATED_CDS"/>
    <property type="molecule type" value="Genomic_DNA"/>
</dbReference>
<dbReference type="EMBL" id="AJ970307">
    <property type="protein sequence ID" value="CAJ00809.1"/>
    <property type="molecule type" value="Genomic_DNA"/>
</dbReference>
<dbReference type="EMBL" id="DQ865975">
    <property type="protein sequence ID" value="ABI97463.1"/>
    <property type="molecule type" value="Genomic_DNA"/>
</dbReference>
<dbReference type="EMBL" id="DQ865976">
    <property type="protein sequence ID" value="ABI98794.1"/>
    <property type="molecule type" value="Genomic_DNA"/>
</dbReference>
<dbReference type="RefSeq" id="YP_247650.1">
    <property type="nucleotide sequence ID" value="NC_007144.1"/>
</dbReference>
<dbReference type="SMR" id="Q4VZL8"/>
<dbReference type="GeneID" id="3429256"/>
<dbReference type="KEGG" id="csv:3429256"/>
<dbReference type="OrthoDB" id="564260at2759"/>
<dbReference type="GO" id="GO:0009535">
    <property type="term" value="C:chloroplast thylakoid membrane"/>
    <property type="evidence" value="ECO:0007669"/>
    <property type="project" value="UniProtKB-SubCell"/>
</dbReference>
<dbReference type="GO" id="GO:0008137">
    <property type="term" value="F:NADH dehydrogenase (ubiquinone) activity"/>
    <property type="evidence" value="ECO:0007669"/>
    <property type="project" value="InterPro"/>
</dbReference>
<dbReference type="GO" id="GO:0048038">
    <property type="term" value="F:quinone binding"/>
    <property type="evidence" value="ECO:0007669"/>
    <property type="project" value="UniProtKB-KW"/>
</dbReference>
<dbReference type="GO" id="GO:0042773">
    <property type="term" value="P:ATP synthesis coupled electron transport"/>
    <property type="evidence" value="ECO:0007669"/>
    <property type="project" value="InterPro"/>
</dbReference>
<dbReference type="HAMAP" id="MF_00491">
    <property type="entry name" value="NDH1_NuoM"/>
    <property type="match status" value="1"/>
</dbReference>
<dbReference type="InterPro" id="IPR022997">
    <property type="entry name" value="NADH_Q_OxRdtase_chain4"/>
</dbReference>
<dbReference type="InterPro" id="IPR010227">
    <property type="entry name" value="NADH_Q_OxRdtase_chainM/4"/>
</dbReference>
<dbReference type="InterPro" id="IPR003918">
    <property type="entry name" value="NADH_UbQ_OxRdtase"/>
</dbReference>
<dbReference type="InterPro" id="IPR001750">
    <property type="entry name" value="ND/Mrp_TM"/>
</dbReference>
<dbReference type="NCBIfam" id="TIGR01972">
    <property type="entry name" value="NDH_I_M"/>
    <property type="match status" value="1"/>
</dbReference>
<dbReference type="PANTHER" id="PTHR43507:SF21">
    <property type="entry name" value="NAD(P)H-QUINONE OXIDOREDUCTASE CHAIN 4, CHLOROPLASTIC"/>
    <property type="match status" value="1"/>
</dbReference>
<dbReference type="PANTHER" id="PTHR43507">
    <property type="entry name" value="NADH-UBIQUINONE OXIDOREDUCTASE CHAIN 4"/>
    <property type="match status" value="1"/>
</dbReference>
<dbReference type="Pfam" id="PF00361">
    <property type="entry name" value="Proton_antipo_M"/>
    <property type="match status" value="1"/>
</dbReference>
<dbReference type="PRINTS" id="PR01437">
    <property type="entry name" value="NUOXDRDTASE4"/>
</dbReference>
<reference key="1">
    <citation type="journal article" date="2006" name="Plant Cell Rep.">
        <title>Complete sequence and organization of the cucumber (Cucumis sativus L. cv. Baekmibaekdadagi) chloroplast genome.</title>
        <authorList>
            <person name="Kim J.-S."/>
            <person name="Jung J.D."/>
            <person name="Lee J.-A."/>
            <person name="Park H.-W."/>
            <person name="Oh K.-H."/>
            <person name="Jeong W.J."/>
            <person name="Choi D.-W."/>
            <person name="Liu J.R."/>
            <person name="Cho K.Y."/>
        </authorList>
    </citation>
    <scope>NUCLEOTIDE SEQUENCE [LARGE SCALE GENOMIC DNA]</scope>
    <source>
        <strain>cv. Baekmibaekdadagi</strain>
    </source>
</reference>
<reference key="2">
    <citation type="journal article" date="2007" name="Cell. Mol. Biol. Lett.">
        <title>The complete structure of the cucumber (Cucumis sativus L.) chloroplast genome: its composition and comparative analysis.</title>
        <authorList>
            <person name="Plader W.W."/>
            <person name="Yukawa Y."/>
            <person name="Sugiura M."/>
            <person name="Malepszy S."/>
        </authorList>
    </citation>
    <scope>NUCLEOTIDE SEQUENCE [LARGE SCALE GENOMIC DNA]</scope>
    <scope>RNA EDITING</scope>
    <source>
        <strain>cv. Borszczagowski</strain>
    </source>
</reference>
<reference key="3">
    <citation type="journal article" date="2007" name="Genome">
        <title>Sequencing cucumber (Cucumis sativus L.) chloroplast genomes identifies differences between chilling-tolerant and -susceptible cucumber lines.</title>
        <authorList>
            <person name="Chung S.-M."/>
            <person name="Gordon V.S."/>
            <person name="Staub J.E."/>
        </authorList>
    </citation>
    <scope>NUCLEOTIDE SEQUENCE [LARGE SCALE GENOMIC DNA]</scope>
    <source>
        <strain>cv. Chipper</strain>
        <strain>cv. Gy14</strain>
    </source>
</reference>
<evidence type="ECO:0000255" key="1">
    <source>
        <dbReference type="HAMAP-Rule" id="MF_00491"/>
    </source>
</evidence>
<evidence type="ECO:0000269" key="2">
    <source>
    </source>
</evidence>
<evidence type="ECO:0000305" key="3"/>
<feature type="chain" id="PRO_0000275904" description="NAD(P)H-quinone oxidoreductase chain 4, chloroplastic">
    <location>
        <begin position="1"/>
        <end position="500"/>
    </location>
</feature>
<feature type="transmembrane region" description="Helical" evidence="1">
    <location>
        <begin position="4"/>
        <end position="24"/>
    </location>
</feature>
<feature type="transmembrane region" description="Helical" evidence="1">
    <location>
        <begin position="37"/>
        <end position="57"/>
    </location>
</feature>
<feature type="transmembrane region" description="Helical" evidence="1">
    <location>
        <begin position="87"/>
        <end position="107"/>
    </location>
</feature>
<feature type="transmembrane region" description="Helical" evidence="1">
    <location>
        <begin position="113"/>
        <end position="130"/>
    </location>
</feature>
<feature type="transmembrane region" description="Helical" evidence="1">
    <location>
        <begin position="134"/>
        <end position="154"/>
    </location>
</feature>
<feature type="transmembrane region" description="Helical" evidence="1">
    <location>
        <begin position="167"/>
        <end position="187"/>
    </location>
</feature>
<feature type="transmembrane region" description="Helical" evidence="1">
    <location>
        <begin position="207"/>
        <end position="227"/>
    </location>
</feature>
<feature type="transmembrane region" description="Helical" evidence="1">
    <location>
        <begin position="242"/>
        <end position="262"/>
    </location>
</feature>
<feature type="transmembrane region" description="Helical" evidence="1">
    <location>
        <begin position="272"/>
        <end position="292"/>
    </location>
</feature>
<feature type="transmembrane region" description="Helical" evidence="1">
    <location>
        <begin position="305"/>
        <end position="325"/>
    </location>
</feature>
<feature type="transmembrane region" description="Helical" evidence="1">
    <location>
        <begin position="330"/>
        <end position="350"/>
    </location>
</feature>
<feature type="transmembrane region" description="Helical" evidence="1">
    <location>
        <begin position="364"/>
        <end position="384"/>
    </location>
</feature>
<feature type="transmembrane region" description="Helical" evidence="1">
    <location>
        <begin position="386"/>
        <end position="406"/>
    </location>
</feature>
<feature type="transmembrane region" description="Helical" evidence="1">
    <location>
        <begin position="417"/>
        <end position="437"/>
    </location>
</feature>
<feature type="transmembrane region" description="Helical" evidence="1">
    <location>
        <begin position="463"/>
        <end position="483"/>
    </location>
</feature>
<feature type="sequence conflict" description="In Ref. 2; CAJ00809." evidence="3" ref="2">
    <original>RL</original>
    <variation>EI</variation>
    <location>
        <begin position="79"/>
        <end position="80"/>
    </location>
</feature>
<feature type="sequence conflict" description="In Ref. 2; CAJ00809." evidence="3" ref="2">
    <original>A</original>
    <variation>S</variation>
    <location>
        <position position="250"/>
    </location>
</feature>
<feature type="sequence conflict" description="In Ref. 2; CAJ00809." evidence="3" ref="2">
    <original>K</original>
    <variation>E</variation>
    <location>
        <position position="255"/>
    </location>
</feature>
<feature type="sequence conflict" description="In Ref. 2; CAJ00809." evidence="3" ref="2">
    <original>S</original>
    <variation>N</variation>
    <location>
        <position position="379"/>
    </location>
</feature>
<name>NU4C_CUCSA</name>
<keyword id="KW-0150">Chloroplast</keyword>
<keyword id="KW-0472">Membrane</keyword>
<keyword id="KW-0520">NAD</keyword>
<keyword id="KW-0521">NADP</keyword>
<keyword id="KW-0934">Plastid</keyword>
<keyword id="KW-0618">Plastoquinone</keyword>
<keyword id="KW-0874">Quinone</keyword>
<keyword id="KW-0691">RNA editing</keyword>
<keyword id="KW-0793">Thylakoid</keyword>
<keyword id="KW-1278">Translocase</keyword>
<keyword id="KW-0812">Transmembrane</keyword>
<keyword id="KW-1133">Transmembrane helix</keyword>
<gene>
    <name evidence="1" type="primary">ndhD</name>
    <name type="ordered locus">CsCp105</name>
</gene>
<geneLocation type="chloroplast"/>
<organism>
    <name type="scientific">Cucumis sativus</name>
    <name type="common">Cucumber</name>
    <dbReference type="NCBI Taxonomy" id="3659"/>
    <lineage>
        <taxon>Eukaryota</taxon>
        <taxon>Viridiplantae</taxon>
        <taxon>Streptophyta</taxon>
        <taxon>Embryophyta</taxon>
        <taxon>Tracheophyta</taxon>
        <taxon>Spermatophyta</taxon>
        <taxon>Magnoliopsida</taxon>
        <taxon>eudicotyledons</taxon>
        <taxon>Gunneridae</taxon>
        <taxon>Pentapetalae</taxon>
        <taxon>rosids</taxon>
        <taxon>fabids</taxon>
        <taxon>Cucurbitales</taxon>
        <taxon>Cucurbitaceae</taxon>
        <taxon>Benincaseae</taxon>
        <taxon>Cucumis</taxon>
    </lineage>
</organism>
<accession>Q4VZL8</accession>
<accession>A5J1Y3</accession>
<comment type="catalytic activity">
    <reaction evidence="1">
        <text>a plastoquinone + NADH + (n+1) H(+)(in) = a plastoquinol + NAD(+) + n H(+)(out)</text>
        <dbReference type="Rhea" id="RHEA:42608"/>
        <dbReference type="Rhea" id="RHEA-COMP:9561"/>
        <dbReference type="Rhea" id="RHEA-COMP:9562"/>
        <dbReference type="ChEBI" id="CHEBI:15378"/>
        <dbReference type="ChEBI" id="CHEBI:17757"/>
        <dbReference type="ChEBI" id="CHEBI:57540"/>
        <dbReference type="ChEBI" id="CHEBI:57945"/>
        <dbReference type="ChEBI" id="CHEBI:62192"/>
    </reaction>
</comment>
<comment type="catalytic activity">
    <reaction evidence="1">
        <text>a plastoquinone + NADPH + (n+1) H(+)(in) = a plastoquinol + NADP(+) + n H(+)(out)</text>
        <dbReference type="Rhea" id="RHEA:42612"/>
        <dbReference type="Rhea" id="RHEA-COMP:9561"/>
        <dbReference type="Rhea" id="RHEA-COMP:9562"/>
        <dbReference type="ChEBI" id="CHEBI:15378"/>
        <dbReference type="ChEBI" id="CHEBI:17757"/>
        <dbReference type="ChEBI" id="CHEBI:57783"/>
        <dbReference type="ChEBI" id="CHEBI:58349"/>
        <dbReference type="ChEBI" id="CHEBI:62192"/>
    </reaction>
</comment>
<comment type="subcellular location">
    <subcellularLocation>
        <location evidence="1">Plastid</location>
        <location evidence="1">Chloroplast thylakoid membrane</location>
        <topology evidence="1">Multi-pass membrane protein</topology>
    </subcellularLocation>
</comment>
<comment type="RNA editing">
    <location>
        <position position="1" evidence="2"/>
    </location>
    <text>The initiator methionine is created by RNA editing.</text>
</comment>
<comment type="similarity">
    <text evidence="1">Belongs to the complex I subunit 4 family.</text>
</comment>
<sequence length="500" mass="56159">MNYFPWLTTVVVFPIFAGLLLFFFPHRGNKVMRWYTICICVLELLLTTYAFCYHFELDDPLIQLMEDYKWIPFLDFYWRLGIDGLSIGPILLTGFITTLATLAAWPVTRDSRLFYFLMLAMYSGQIGSFSARDLLLFFIMWEFELIPVYLLLSMWGGKKRLYSATKFILYTAGGSIFLLMGVLGIGLYGSNEPTLNFETSANQSYPIALEILFYIGFLIAFAVKSPIIPLHTWLPDTHGEAHYSTCMLLAGILLKMGAYGLVRINMELLPHAHSIFSPWLIIVGIIQIIYAASTSSGQRNLKKRIAYSSVSHMGFIIIGIGSISDTGLNGAILQIISHGFIGAALFFLAGTSYDRIRLVYLDEMGGLAIPIPKIFTTFSILSMASLALPGMSGFVAELIVFFGIITSQKYLLMTKMVITLVMAIGIILTPIYLLSMLRQMFYGYKLFNAKNSYFFDSGPRELFVAISILIPVIGIGIYPDFVFSLSVDKVEAILSNYFAR</sequence>
<proteinExistence type="evidence at transcript level"/>